<reference key="1">
    <citation type="submission" date="2008-05" db="EMBL/GenBank/DDBJ databases">
        <title>Complete sequence of Shigella boydii serotype 18 strain BS512.</title>
        <authorList>
            <person name="Rasko D.A."/>
            <person name="Rosovitz M."/>
            <person name="Maurelli A.T."/>
            <person name="Myers G."/>
            <person name="Seshadri R."/>
            <person name="Cer R."/>
            <person name="Jiang L."/>
            <person name="Ravel J."/>
            <person name="Sebastian Y."/>
        </authorList>
    </citation>
    <scope>NUCLEOTIDE SEQUENCE [LARGE SCALE GENOMIC DNA]</scope>
    <source>
        <strain>CDC 3083-94 / BS512</strain>
    </source>
</reference>
<feature type="chain" id="PRO_1000139715" description="Putative N-acetylmannosamine-6-phosphate 2-epimerase">
    <location>
        <begin position="1"/>
        <end position="229"/>
    </location>
</feature>
<name>NANE_SHIB3</name>
<organism>
    <name type="scientific">Shigella boydii serotype 18 (strain CDC 3083-94 / BS512)</name>
    <dbReference type="NCBI Taxonomy" id="344609"/>
    <lineage>
        <taxon>Bacteria</taxon>
        <taxon>Pseudomonadati</taxon>
        <taxon>Pseudomonadota</taxon>
        <taxon>Gammaproteobacteria</taxon>
        <taxon>Enterobacterales</taxon>
        <taxon>Enterobacteriaceae</taxon>
        <taxon>Shigella</taxon>
    </lineage>
</organism>
<keyword id="KW-0119">Carbohydrate metabolism</keyword>
<keyword id="KW-0413">Isomerase</keyword>
<keyword id="KW-1185">Reference proteome</keyword>
<accession>B2U1W1</accession>
<dbReference type="EC" id="5.1.3.9" evidence="1"/>
<dbReference type="EMBL" id="CP001063">
    <property type="protein sequence ID" value="ACD07837.1"/>
    <property type="molecule type" value="Genomic_DNA"/>
</dbReference>
<dbReference type="RefSeq" id="WP_000054239.1">
    <property type="nucleotide sequence ID" value="NC_010658.1"/>
</dbReference>
<dbReference type="SMR" id="B2U1W1"/>
<dbReference type="STRING" id="344609.SbBS512_E3553"/>
<dbReference type="KEGG" id="sbc:SbBS512_E3553"/>
<dbReference type="HOGENOM" id="CLU_086300_0_0_6"/>
<dbReference type="UniPathway" id="UPA00629">
    <property type="reaction ID" value="UER00682"/>
</dbReference>
<dbReference type="Proteomes" id="UP000001030">
    <property type="component" value="Chromosome"/>
</dbReference>
<dbReference type="GO" id="GO:0005829">
    <property type="term" value="C:cytosol"/>
    <property type="evidence" value="ECO:0007669"/>
    <property type="project" value="TreeGrafter"/>
</dbReference>
<dbReference type="GO" id="GO:0047465">
    <property type="term" value="F:N-acylglucosamine-6-phosphate 2-epimerase activity"/>
    <property type="evidence" value="ECO:0007669"/>
    <property type="project" value="UniProtKB-EC"/>
</dbReference>
<dbReference type="GO" id="GO:0005975">
    <property type="term" value="P:carbohydrate metabolic process"/>
    <property type="evidence" value="ECO:0007669"/>
    <property type="project" value="UniProtKB-UniRule"/>
</dbReference>
<dbReference type="GO" id="GO:0006053">
    <property type="term" value="P:N-acetylmannosamine catabolic process"/>
    <property type="evidence" value="ECO:0007669"/>
    <property type="project" value="TreeGrafter"/>
</dbReference>
<dbReference type="GO" id="GO:0019262">
    <property type="term" value="P:N-acetylneuraminate catabolic process"/>
    <property type="evidence" value="ECO:0007669"/>
    <property type="project" value="UniProtKB-UniRule"/>
</dbReference>
<dbReference type="CDD" id="cd04729">
    <property type="entry name" value="NanE"/>
    <property type="match status" value="1"/>
</dbReference>
<dbReference type="FunFam" id="3.20.20.70:FF:000035">
    <property type="entry name" value="Putative N-acetylmannosamine-6-phosphate 2-epimerase"/>
    <property type="match status" value="1"/>
</dbReference>
<dbReference type="Gene3D" id="3.20.20.70">
    <property type="entry name" value="Aldolase class I"/>
    <property type="match status" value="1"/>
</dbReference>
<dbReference type="HAMAP" id="MF_01235">
    <property type="entry name" value="ManNAc6P_epimer"/>
    <property type="match status" value="1"/>
</dbReference>
<dbReference type="InterPro" id="IPR013785">
    <property type="entry name" value="Aldolase_TIM"/>
</dbReference>
<dbReference type="InterPro" id="IPR007260">
    <property type="entry name" value="NanE"/>
</dbReference>
<dbReference type="InterPro" id="IPR011060">
    <property type="entry name" value="RibuloseP-bd_barrel"/>
</dbReference>
<dbReference type="NCBIfam" id="NF002231">
    <property type="entry name" value="PRK01130.1"/>
    <property type="match status" value="1"/>
</dbReference>
<dbReference type="PANTHER" id="PTHR36204">
    <property type="entry name" value="N-ACETYLMANNOSAMINE-6-PHOSPHATE 2-EPIMERASE-RELATED"/>
    <property type="match status" value="1"/>
</dbReference>
<dbReference type="PANTHER" id="PTHR36204:SF1">
    <property type="entry name" value="N-ACETYLMANNOSAMINE-6-PHOSPHATE 2-EPIMERASE-RELATED"/>
    <property type="match status" value="1"/>
</dbReference>
<dbReference type="Pfam" id="PF04131">
    <property type="entry name" value="NanE"/>
    <property type="match status" value="1"/>
</dbReference>
<dbReference type="SUPFAM" id="SSF51366">
    <property type="entry name" value="Ribulose-phoshate binding barrel"/>
    <property type="match status" value="1"/>
</dbReference>
<evidence type="ECO:0000255" key="1">
    <source>
        <dbReference type="HAMAP-Rule" id="MF_01235"/>
    </source>
</evidence>
<protein>
    <recommendedName>
        <fullName evidence="1">Putative N-acetylmannosamine-6-phosphate 2-epimerase</fullName>
        <ecNumber evidence="1">5.1.3.9</ecNumber>
    </recommendedName>
    <alternativeName>
        <fullName evidence="1">ManNAc-6-P epimerase</fullName>
    </alternativeName>
</protein>
<proteinExistence type="inferred from homology"/>
<comment type="function">
    <text evidence="1">Converts N-acetylmannosamine-6-phosphate (ManNAc-6-P) to N-acetylglucosamine-6-phosphate (GlcNAc-6-P).</text>
</comment>
<comment type="catalytic activity">
    <reaction evidence="1">
        <text>an N-acyl-D-glucosamine 6-phosphate = an N-acyl-D-mannosamine 6-phosphate</text>
        <dbReference type="Rhea" id="RHEA:23932"/>
        <dbReference type="ChEBI" id="CHEBI:57599"/>
        <dbReference type="ChEBI" id="CHEBI:57666"/>
        <dbReference type="EC" id="5.1.3.9"/>
    </reaction>
</comment>
<comment type="pathway">
    <text evidence="1">Amino-sugar metabolism; N-acetylneuraminate degradation; D-fructose 6-phosphate from N-acetylneuraminate: step 3/5.</text>
</comment>
<comment type="similarity">
    <text evidence="1">Belongs to the NanE family.</text>
</comment>
<sequence>MSLLAQLDQKIAANGGLIVSCQPVPDSPLDKPEIVAAMALAAEQAGAVAIRIEGVANLQATRAVVSVPIIGIVKRDLEDSPVRITAYIEDVDALAQAGADIIAIDGTDRPRPVPVETLLARIHHHGLLAMTDCSTPEDGLACQKLGAEIIGTTLSGYTTPETPEEPDLALVKTLSDAGCRVIAEGRYNTPAQAADAMRHGAWAVTVGSAITRLEHICQWYNTAMKKAVL</sequence>
<gene>
    <name evidence="1" type="primary">nanE</name>
    <name type="ordered locus">SbBS512_E3553</name>
</gene>